<protein>
    <recommendedName>
        <fullName evidence="1">UPF0346 protein Spy49_0395</fullName>
    </recommendedName>
</protein>
<dbReference type="EMBL" id="CP000829">
    <property type="protein sequence ID" value="ACI60729.1"/>
    <property type="molecule type" value="Genomic_DNA"/>
</dbReference>
<dbReference type="SMR" id="B5XK67"/>
<dbReference type="KEGG" id="soz:Spy49_0395"/>
<dbReference type="HOGENOM" id="CLU_177534_1_0_9"/>
<dbReference type="Proteomes" id="UP000001039">
    <property type="component" value="Chromosome"/>
</dbReference>
<dbReference type="Gene3D" id="1.10.150.260">
    <property type="entry name" value="YozE SAM-like"/>
    <property type="match status" value="1"/>
</dbReference>
<dbReference type="HAMAP" id="MF_01538">
    <property type="entry name" value="UPF0346"/>
    <property type="match status" value="1"/>
</dbReference>
<dbReference type="InterPro" id="IPR010673">
    <property type="entry name" value="UPF0346"/>
</dbReference>
<dbReference type="InterPro" id="IPR023089">
    <property type="entry name" value="YozE_SAM-like"/>
</dbReference>
<dbReference type="InterPro" id="IPR036806">
    <property type="entry name" value="YozE_SAM-like_sf"/>
</dbReference>
<dbReference type="NCBIfam" id="NF010193">
    <property type="entry name" value="PRK13672.1"/>
    <property type="match status" value="1"/>
</dbReference>
<dbReference type="Pfam" id="PF06855">
    <property type="entry name" value="YozE_SAM_like"/>
    <property type="match status" value="1"/>
</dbReference>
<dbReference type="PIRSF" id="PIRSF037262">
    <property type="entry name" value="UCP037262"/>
    <property type="match status" value="1"/>
</dbReference>
<dbReference type="SUPFAM" id="SSF140652">
    <property type="entry name" value="YozE-like"/>
    <property type="match status" value="1"/>
</dbReference>
<comment type="similarity">
    <text evidence="1">Belongs to the UPF0346 family.</text>
</comment>
<feature type="chain" id="PRO_1000198694" description="UPF0346 protein Spy49_0395">
    <location>
        <begin position="1"/>
        <end position="71"/>
    </location>
</feature>
<sequence length="71" mass="8481">MRKSFYSWLMTQRNPKSNEPVAILADLVFDDTTFPKHTNDFELISRYLEDQASFSFNLGQFDEIWEDYLAH</sequence>
<gene>
    <name type="ordered locus">Spy49_0395</name>
</gene>
<accession>B5XK67</accession>
<proteinExistence type="inferred from homology"/>
<evidence type="ECO:0000255" key="1">
    <source>
        <dbReference type="HAMAP-Rule" id="MF_01538"/>
    </source>
</evidence>
<reference key="1">
    <citation type="journal article" date="2008" name="J. Bacteriol.">
        <title>Genome sequence of a nephritogenic and highly transformable M49 strain of Streptococcus pyogenes.</title>
        <authorList>
            <person name="McShan W.M."/>
            <person name="Ferretti J.J."/>
            <person name="Karasawa T."/>
            <person name="Suvorov A.N."/>
            <person name="Lin S."/>
            <person name="Qin B."/>
            <person name="Jia H."/>
            <person name="Kenton S."/>
            <person name="Najar F."/>
            <person name="Wu H."/>
            <person name="Scott J."/>
            <person name="Roe B.A."/>
            <person name="Savic D.J."/>
        </authorList>
    </citation>
    <scope>NUCLEOTIDE SEQUENCE [LARGE SCALE GENOMIC DNA]</scope>
    <source>
        <strain>NZ131</strain>
    </source>
</reference>
<organism>
    <name type="scientific">Streptococcus pyogenes serotype M49 (strain NZ131)</name>
    <dbReference type="NCBI Taxonomy" id="471876"/>
    <lineage>
        <taxon>Bacteria</taxon>
        <taxon>Bacillati</taxon>
        <taxon>Bacillota</taxon>
        <taxon>Bacilli</taxon>
        <taxon>Lactobacillales</taxon>
        <taxon>Streptococcaceae</taxon>
        <taxon>Streptococcus</taxon>
    </lineage>
</organism>
<name>Y395_STRPZ</name>